<feature type="chain" id="PRO_0000143085" description="Bcl-2-binding component 3">
    <location>
        <begin position="1"/>
        <end position="193"/>
    </location>
</feature>
<feature type="region of interest" description="Disordered" evidence="4">
    <location>
        <begin position="1"/>
        <end position="32"/>
    </location>
</feature>
<feature type="region of interest" description="Disordered" evidence="4">
    <location>
        <begin position="71"/>
        <end position="131"/>
    </location>
</feature>
<feature type="short sequence motif" description="BH3">
    <location>
        <begin position="137"/>
        <end position="151"/>
    </location>
</feature>
<feature type="modified residue" description="Phosphoserine" evidence="3">
    <location>
        <position position="10"/>
    </location>
</feature>
<comment type="function">
    <text evidence="2 3">Essential mediator of p53/TP53-dependent and p53/TP53-independent apoptosis. Promotes partial unfolding of BCL2L1 and dissociation of BCL2L1 from p53/TP53, releasing the bound p53/TP53 to induce apoptosis. Regulates ER stress-induced neuronal apoptosis.</text>
</comment>
<comment type="subunit">
    <text evidence="2 3 5">Interacts with MCL1 and BCL2A1 (By similarity). Interacts (via BH3 domain) with BCL2 and BCL2L1/BCL-XL (By similarity). Interacts (via BH3 domain) with NOL3/ARC (via CARD domain); this interaction prevents BBC3 association with BCL2 and results in CASP8 activation (PubMed:17998337).</text>
</comment>
<comment type="subcellular location">
    <subcellularLocation>
        <location>Mitochondrion</location>
    </subcellularLocation>
    <text evidence="1">Localized to the mitochondria in order to induce cytochrome c release.</text>
</comment>
<comment type="induction">
    <text evidence="1">By DNA damage, glucocorticoid treatment, growth factor deprivation and p53.</text>
</comment>
<comment type="domain">
    <text evidence="2 3">The BH3 motif is intrinsically disordered in the absence of a binding partner but folds upon binding (By similarity). Folds when bound to BCL2L1 (By similarity). Also folds when bound to MCL1 (By similarity).</text>
</comment>
<comment type="similarity">
    <text evidence="6">Belongs to the Bcl-2 family.</text>
</comment>
<proteinExistence type="evidence at protein level"/>
<name>BBC3_RAT</name>
<keyword id="KW-0053">Apoptosis</keyword>
<keyword id="KW-0496">Mitochondrion</keyword>
<keyword id="KW-0597">Phosphoprotein</keyword>
<keyword id="KW-1185">Reference proteome</keyword>
<sequence length="193" mass="20718">MARARQEGSSPEPVEGLARDSPRPFPLGRLMPSAVSCGLCEPGLPAAPAAPALLPAAYLCAPTAPPAVTAALGGPRWPGGHRSRPRGPRPDGPQPSLSPAQQHLESPVPSAPEALAGGPTQAAPGVRVEEEEWAREIGAQLRRMADDLNAQYERRRQEEQHRHRPSPWRVMYNLFMGLLPLPRDPGAPEMEPN</sequence>
<protein>
    <recommendedName>
        <fullName>Bcl-2-binding component 3</fullName>
    </recommendedName>
    <alternativeName>
        <fullName>p53 up-regulated modulator of apoptosis</fullName>
    </alternativeName>
</protein>
<reference key="1">
    <citation type="journal article" date="2003" name="J. Neurochem.">
        <title>Bcl-2-related protein family gene expression during oligodendroglial differentiation.</title>
        <authorList>
            <person name="Itoh T."/>
            <person name="Itoh A."/>
            <person name="Pleasure D."/>
        </authorList>
    </citation>
    <scope>NUCLEOTIDE SEQUENCE [MRNA]</scope>
    <source>
        <strain>Sprague-Dawley</strain>
    </source>
</reference>
<reference key="2">
    <citation type="journal article" date="2008" name="Mol. Cell. Biol.">
        <title>p53 initiates apoptosis by transcriptionally targeting the antiapoptotic protein ARC.</title>
        <authorList>
            <person name="Li Y.Z."/>
            <person name="Lu D.Y."/>
            <person name="Tan W.Q."/>
            <person name="Wang J.X."/>
            <person name="Li P.F."/>
        </authorList>
    </citation>
    <scope>INTERACTION WITH NOL3</scope>
</reference>
<evidence type="ECO:0000250" key="1"/>
<evidence type="ECO:0000250" key="2">
    <source>
        <dbReference type="UniProtKB" id="Q99ML1"/>
    </source>
</evidence>
<evidence type="ECO:0000250" key="3">
    <source>
        <dbReference type="UniProtKB" id="Q9BXH1"/>
    </source>
</evidence>
<evidence type="ECO:0000256" key="4">
    <source>
        <dbReference type="SAM" id="MobiDB-lite"/>
    </source>
</evidence>
<evidence type="ECO:0000269" key="5">
    <source>
    </source>
</evidence>
<evidence type="ECO:0000305" key="6"/>
<accession>Q80ZG6</accession>
<dbReference type="EMBL" id="AY157758">
    <property type="protein sequence ID" value="AAO16862.1"/>
    <property type="molecule type" value="mRNA"/>
</dbReference>
<dbReference type="RefSeq" id="NP_776209.1">
    <property type="nucleotide sequence ID" value="NM_173837.2"/>
</dbReference>
<dbReference type="RefSeq" id="XP_038936853.1">
    <property type="nucleotide sequence ID" value="XM_039080925.2"/>
</dbReference>
<dbReference type="ComplexPortal" id="CPX-2028">
    <property type="entry name" value="PUMA:BCL-2 complex"/>
</dbReference>
<dbReference type="ComplexPortal" id="CPX-2030">
    <property type="entry name" value="PUMA:BCL-XL complex"/>
</dbReference>
<dbReference type="FunCoup" id="Q80ZG6">
    <property type="interactions" value="199"/>
</dbReference>
<dbReference type="GlyGen" id="Q80ZG6">
    <property type="glycosylation" value="2 sites"/>
</dbReference>
<dbReference type="PhosphoSitePlus" id="Q80ZG6"/>
<dbReference type="PaxDb" id="10116-ENSRNOP00000064216"/>
<dbReference type="Ensembl" id="ENSRNOT00000101734.1">
    <property type="protein sequence ID" value="ENSRNOP00000076660.1"/>
    <property type="gene ID" value="ENSRNOG00000062473.1"/>
</dbReference>
<dbReference type="GeneID" id="317673"/>
<dbReference type="KEGG" id="rno:317673"/>
<dbReference type="AGR" id="RGD:631434"/>
<dbReference type="CTD" id="27113"/>
<dbReference type="RGD" id="631434">
    <property type="gene designation" value="Bbc3"/>
</dbReference>
<dbReference type="GeneTree" id="ENSGT00390000002767"/>
<dbReference type="InParanoid" id="Q80ZG6"/>
<dbReference type="PhylomeDB" id="Q80ZG6"/>
<dbReference type="PRO" id="PR:Q80ZG6"/>
<dbReference type="Proteomes" id="UP000002494">
    <property type="component" value="Chromosome 1"/>
</dbReference>
<dbReference type="GO" id="GO:0005764">
    <property type="term" value="C:lysosome"/>
    <property type="evidence" value="ECO:0000266"/>
    <property type="project" value="RGD"/>
</dbReference>
<dbReference type="GO" id="GO:0005739">
    <property type="term" value="C:mitochondrion"/>
    <property type="evidence" value="ECO:0000266"/>
    <property type="project" value="RGD"/>
</dbReference>
<dbReference type="GO" id="GO:0051117">
    <property type="term" value="F:ATPase binding"/>
    <property type="evidence" value="ECO:0000266"/>
    <property type="project" value="RGD"/>
</dbReference>
<dbReference type="GO" id="GO:0006915">
    <property type="term" value="P:apoptotic process"/>
    <property type="evidence" value="ECO:0000266"/>
    <property type="project" value="RGD"/>
</dbReference>
<dbReference type="GO" id="GO:0097190">
    <property type="term" value="P:apoptotic signaling pathway"/>
    <property type="evidence" value="ECO:0000266"/>
    <property type="project" value="RGD"/>
</dbReference>
<dbReference type="GO" id="GO:0071456">
    <property type="term" value="P:cellular response to hypoxia"/>
    <property type="evidence" value="ECO:0000266"/>
    <property type="project" value="RGD"/>
</dbReference>
<dbReference type="GO" id="GO:0071479">
    <property type="term" value="P:cellular response to ionizing radiation"/>
    <property type="evidence" value="ECO:0000266"/>
    <property type="project" value="RGD"/>
</dbReference>
<dbReference type="GO" id="GO:0008340">
    <property type="term" value="P:determination of adult lifespan"/>
    <property type="evidence" value="ECO:0000266"/>
    <property type="project" value="RGD"/>
</dbReference>
<dbReference type="GO" id="GO:0006974">
    <property type="term" value="P:DNA damage response"/>
    <property type="evidence" value="ECO:0000266"/>
    <property type="project" value="RGD"/>
</dbReference>
<dbReference type="GO" id="GO:0097194">
    <property type="term" value="P:execution phase of apoptosis"/>
    <property type="evidence" value="ECO:0000266"/>
    <property type="project" value="RGD"/>
</dbReference>
<dbReference type="GO" id="GO:0044346">
    <property type="term" value="P:fibroblast apoptotic process"/>
    <property type="evidence" value="ECO:0000266"/>
    <property type="project" value="RGD"/>
</dbReference>
<dbReference type="GO" id="GO:0097193">
    <property type="term" value="P:intrinsic apoptotic signaling pathway"/>
    <property type="evidence" value="ECO:0000266"/>
    <property type="project" value="RGD"/>
</dbReference>
<dbReference type="GO" id="GO:0042771">
    <property type="term" value="P:intrinsic apoptotic signaling pathway in response to DNA damage by p53 class mediator"/>
    <property type="evidence" value="ECO:0000266"/>
    <property type="project" value="RGD"/>
</dbReference>
<dbReference type="GO" id="GO:0070059">
    <property type="term" value="P:intrinsic apoptotic signaling pathway in response to endoplasmic reticulum stress"/>
    <property type="evidence" value="ECO:0000250"/>
    <property type="project" value="UniProtKB"/>
</dbReference>
<dbReference type="GO" id="GO:0070227">
    <property type="term" value="P:lymphocyte apoptotic process"/>
    <property type="evidence" value="ECO:0000266"/>
    <property type="project" value="RGD"/>
</dbReference>
<dbReference type="GO" id="GO:1903749">
    <property type="term" value="P:positive regulation of establishment of protein localization to mitochondrion"/>
    <property type="evidence" value="ECO:0000266"/>
    <property type="project" value="RGD"/>
</dbReference>
<dbReference type="GO" id="GO:2000271">
    <property type="term" value="P:positive regulation of fibroblast apoptotic process"/>
    <property type="evidence" value="ECO:0000266"/>
    <property type="project" value="RGD"/>
</dbReference>
<dbReference type="GO" id="GO:2001244">
    <property type="term" value="P:positive regulation of intrinsic apoptotic signaling pathway"/>
    <property type="evidence" value="ECO:0000315"/>
    <property type="project" value="UniProtKB"/>
</dbReference>
<dbReference type="GO" id="GO:0070230">
    <property type="term" value="P:positive regulation of lymphocyte apoptotic process"/>
    <property type="evidence" value="ECO:0000266"/>
    <property type="project" value="RGD"/>
</dbReference>
<dbReference type="GO" id="GO:0043525">
    <property type="term" value="P:positive regulation of neuron apoptotic process"/>
    <property type="evidence" value="ECO:0000250"/>
    <property type="project" value="UniProtKB"/>
</dbReference>
<dbReference type="GO" id="GO:0031334">
    <property type="term" value="P:positive regulation of protein-containing complex assembly"/>
    <property type="evidence" value="ECO:0000266"/>
    <property type="project" value="RGD"/>
</dbReference>
<dbReference type="GO" id="GO:0090200">
    <property type="term" value="P:positive regulation of release of cytochrome c from mitochondria"/>
    <property type="evidence" value="ECO:0000266"/>
    <property type="project" value="RGD"/>
</dbReference>
<dbReference type="GO" id="GO:0070234">
    <property type="term" value="P:positive regulation of T cell apoptotic process"/>
    <property type="evidence" value="ECO:0000266"/>
    <property type="project" value="RGD"/>
</dbReference>
<dbReference type="GO" id="GO:0070245">
    <property type="term" value="P:positive regulation of thymocyte apoptotic process"/>
    <property type="evidence" value="ECO:0000266"/>
    <property type="project" value="RGD"/>
</dbReference>
<dbReference type="GO" id="GO:0001836">
    <property type="term" value="P:release of cytochrome c from mitochondria"/>
    <property type="evidence" value="ECO:0000266"/>
    <property type="project" value="RGD"/>
</dbReference>
<dbReference type="GO" id="GO:0034976">
    <property type="term" value="P:response to endoplasmic reticulum stress"/>
    <property type="evidence" value="ECO:0000250"/>
    <property type="project" value="UniProtKB"/>
</dbReference>
<dbReference type="GO" id="GO:0070231">
    <property type="term" value="P:T cell apoptotic process"/>
    <property type="evidence" value="ECO:0000266"/>
    <property type="project" value="RGD"/>
</dbReference>
<dbReference type="InterPro" id="IPR031661">
    <property type="entry name" value="Bbc3"/>
</dbReference>
<dbReference type="PANTHER" id="PTHR28639">
    <property type="entry name" value="BCL-2-BINDING COMPONENT 3"/>
    <property type="match status" value="1"/>
</dbReference>
<dbReference type="PANTHER" id="PTHR28639:SF1">
    <property type="entry name" value="BCL-2-BINDING COMPONENT 3, ISOFORMS 3_4"/>
    <property type="match status" value="1"/>
</dbReference>
<dbReference type="Pfam" id="PF15826">
    <property type="entry name" value="PUMA"/>
    <property type="match status" value="1"/>
</dbReference>
<gene>
    <name type="primary">Bbc3</name>
    <name type="synonym">Puma</name>
</gene>
<organism>
    <name type="scientific">Rattus norvegicus</name>
    <name type="common">Rat</name>
    <dbReference type="NCBI Taxonomy" id="10116"/>
    <lineage>
        <taxon>Eukaryota</taxon>
        <taxon>Metazoa</taxon>
        <taxon>Chordata</taxon>
        <taxon>Craniata</taxon>
        <taxon>Vertebrata</taxon>
        <taxon>Euteleostomi</taxon>
        <taxon>Mammalia</taxon>
        <taxon>Eutheria</taxon>
        <taxon>Euarchontoglires</taxon>
        <taxon>Glires</taxon>
        <taxon>Rodentia</taxon>
        <taxon>Myomorpha</taxon>
        <taxon>Muroidea</taxon>
        <taxon>Muridae</taxon>
        <taxon>Murinae</taxon>
        <taxon>Rattus</taxon>
    </lineage>
</organism>